<gene>
    <name type="primary">hb</name>
</gene>
<keyword id="KW-0217">Developmental protein</keyword>
<keyword id="KW-0238">DNA-binding</keyword>
<keyword id="KW-0302">Gap protein</keyword>
<keyword id="KW-0479">Metal-binding</keyword>
<keyword id="KW-0539">Nucleus</keyword>
<keyword id="KW-0677">Repeat</keyword>
<keyword id="KW-0862">Zinc</keyword>
<keyword id="KW-0863">Zinc-finger</keyword>
<evidence type="ECO:0000250" key="1"/>
<evidence type="ECO:0000256" key="2">
    <source>
        <dbReference type="SAM" id="MobiDB-lite"/>
    </source>
</evidence>
<evidence type="ECO:0000305" key="3"/>
<proteinExistence type="inferred from homology"/>
<reference key="1">
    <citation type="journal article" date="1997" name="Syst. Biol.">
        <title>Multiple sources of character information and the phylogeny of Hawaiian Drosophilids.</title>
        <authorList>
            <person name="Baker R.H."/>
            <person name="DeSalle R."/>
        </authorList>
    </citation>
    <scope>NUCLEOTIDE SEQUENCE [GENOMIC DNA]</scope>
</reference>
<protein>
    <recommendedName>
        <fullName>Protein hunchback</fullName>
    </recommendedName>
</protein>
<comment type="function">
    <text evidence="1">Gap class segmentation protein that controls development of head structures.</text>
</comment>
<comment type="subcellular location">
    <subcellularLocation>
        <location evidence="1">Nucleus</location>
    </subcellularLocation>
</comment>
<comment type="similarity">
    <text evidence="3">Belongs to the hunchback C2H2-type zinc-finger protein family.</text>
</comment>
<organism>
    <name type="scientific">Drosophila mimica</name>
    <name type="common">Fruit fly</name>
    <name type="synonym">Idiomyia mimica</name>
    <dbReference type="NCBI Taxonomy" id="7270"/>
    <lineage>
        <taxon>Eukaryota</taxon>
        <taxon>Metazoa</taxon>
        <taxon>Ecdysozoa</taxon>
        <taxon>Arthropoda</taxon>
        <taxon>Hexapoda</taxon>
        <taxon>Insecta</taxon>
        <taxon>Pterygota</taxon>
        <taxon>Neoptera</taxon>
        <taxon>Endopterygota</taxon>
        <taxon>Diptera</taxon>
        <taxon>Brachycera</taxon>
        <taxon>Muscomorpha</taxon>
        <taxon>Ephydroidea</taxon>
        <taxon>Drosophilidae</taxon>
        <taxon>Drosophila</taxon>
        <taxon>Hawaiian Drosophila</taxon>
    </lineage>
</organism>
<dbReference type="EMBL" id="U93012">
    <property type="protein sequence ID" value="AAC03260.1"/>
    <property type="molecule type" value="Genomic_DNA"/>
</dbReference>
<dbReference type="EMBL" id="U93013">
    <property type="protein sequence ID" value="AAC03261.1"/>
    <property type="molecule type" value="Genomic_DNA"/>
</dbReference>
<dbReference type="GO" id="GO:0005634">
    <property type="term" value="C:nucleus"/>
    <property type="evidence" value="ECO:0007669"/>
    <property type="project" value="UniProtKB-SubCell"/>
</dbReference>
<dbReference type="GO" id="GO:0003677">
    <property type="term" value="F:DNA binding"/>
    <property type="evidence" value="ECO:0007669"/>
    <property type="project" value="UniProtKB-KW"/>
</dbReference>
<dbReference type="GO" id="GO:0008270">
    <property type="term" value="F:zinc ion binding"/>
    <property type="evidence" value="ECO:0007669"/>
    <property type="project" value="UniProtKB-KW"/>
</dbReference>
<dbReference type="GO" id="GO:0035282">
    <property type="term" value="P:segmentation"/>
    <property type="evidence" value="ECO:0007669"/>
    <property type="project" value="UniProtKB-KW"/>
</dbReference>
<sequence length="158" mass="17576">WYSSMFAANIKQEPISHHNHHHHHHHGHHQHQQRHNSNSNASSPHQSPLPNLQLEQYLKQQQQQPLMPPGLPNPMQTIMPANMRPSPTARTTTTTAAAAPTTTAAAIAMQANDKLQALTPPMDVTPPKSPAKTQQSCAEPEKEHDLMSNSSEDMKYMA</sequence>
<feature type="chain" id="PRO_0000046957" description="Protein hunchback">
    <location>
        <begin position="1" status="less than"/>
        <end position="158" status="greater than"/>
    </location>
</feature>
<feature type="region of interest" description="Disordered" evidence="2">
    <location>
        <begin position="18"/>
        <end position="96"/>
    </location>
</feature>
<feature type="region of interest" description="Disordered" evidence="2">
    <location>
        <begin position="118"/>
        <end position="158"/>
    </location>
</feature>
<feature type="compositionally biased region" description="Basic residues" evidence="2">
    <location>
        <begin position="18"/>
        <end position="34"/>
    </location>
</feature>
<feature type="compositionally biased region" description="Polar residues" evidence="2">
    <location>
        <begin position="41"/>
        <end position="50"/>
    </location>
</feature>
<feature type="compositionally biased region" description="Low complexity" evidence="2">
    <location>
        <begin position="52"/>
        <end position="65"/>
    </location>
</feature>
<feature type="compositionally biased region" description="Basic and acidic residues" evidence="2">
    <location>
        <begin position="139"/>
        <end position="158"/>
    </location>
</feature>
<feature type="non-consecutive residues" evidence="3">
    <location>
        <begin position="64"/>
        <end position="65"/>
    </location>
</feature>
<feature type="non-terminal residue">
    <location>
        <position position="1"/>
    </location>
</feature>
<feature type="non-terminal residue">
    <location>
        <position position="158"/>
    </location>
</feature>
<accession>O46248</accession>
<accession>O46249</accession>
<name>HUNB_DROMM</name>